<feature type="chain" id="PRO_1000093225" description="Phosphomethylpyrimidine synthase">
    <location>
        <begin position="1"/>
        <end position="628"/>
    </location>
</feature>
<feature type="region of interest" description="Disordered" evidence="2">
    <location>
        <begin position="1"/>
        <end position="22"/>
    </location>
</feature>
<feature type="compositionally biased region" description="Polar residues" evidence="2">
    <location>
        <begin position="7"/>
        <end position="22"/>
    </location>
</feature>
<feature type="binding site" evidence="1">
    <location>
        <position position="232"/>
    </location>
    <ligand>
        <name>substrate</name>
    </ligand>
</feature>
<feature type="binding site" evidence="1">
    <location>
        <position position="261"/>
    </location>
    <ligand>
        <name>substrate</name>
    </ligand>
</feature>
<feature type="binding site" evidence="1">
    <location>
        <position position="290"/>
    </location>
    <ligand>
        <name>substrate</name>
    </ligand>
</feature>
<feature type="binding site" evidence="1">
    <location>
        <position position="326"/>
    </location>
    <ligand>
        <name>substrate</name>
    </ligand>
</feature>
<feature type="binding site" evidence="1">
    <location>
        <begin position="346"/>
        <end position="348"/>
    </location>
    <ligand>
        <name>substrate</name>
    </ligand>
</feature>
<feature type="binding site" evidence="1">
    <location>
        <begin position="387"/>
        <end position="390"/>
    </location>
    <ligand>
        <name>substrate</name>
    </ligand>
</feature>
<feature type="binding site" evidence="1">
    <location>
        <position position="426"/>
    </location>
    <ligand>
        <name>substrate</name>
    </ligand>
</feature>
<feature type="binding site" evidence="1">
    <location>
        <position position="430"/>
    </location>
    <ligand>
        <name>Zn(2+)</name>
        <dbReference type="ChEBI" id="CHEBI:29105"/>
    </ligand>
</feature>
<feature type="binding site" evidence="1">
    <location>
        <position position="453"/>
    </location>
    <ligand>
        <name>substrate</name>
    </ligand>
</feature>
<feature type="binding site" evidence="1">
    <location>
        <position position="494"/>
    </location>
    <ligand>
        <name>Zn(2+)</name>
        <dbReference type="ChEBI" id="CHEBI:29105"/>
    </ligand>
</feature>
<feature type="binding site" evidence="1">
    <location>
        <position position="574"/>
    </location>
    <ligand>
        <name>[4Fe-4S] cluster</name>
        <dbReference type="ChEBI" id="CHEBI:49883"/>
        <note>4Fe-4S-S-AdoMet</note>
    </ligand>
</feature>
<feature type="binding site" evidence="1">
    <location>
        <position position="577"/>
    </location>
    <ligand>
        <name>[4Fe-4S] cluster</name>
        <dbReference type="ChEBI" id="CHEBI:49883"/>
        <note>4Fe-4S-S-AdoMet</note>
    </ligand>
</feature>
<feature type="binding site" evidence="1">
    <location>
        <position position="582"/>
    </location>
    <ligand>
        <name>[4Fe-4S] cluster</name>
        <dbReference type="ChEBI" id="CHEBI:49883"/>
        <note>4Fe-4S-S-AdoMet</note>
    </ligand>
</feature>
<accession>B1JAG3</accession>
<proteinExistence type="inferred from homology"/>
<dbReference type="EC" id="4.1.99.17" evidence="1"/>
<dbReference type="EMBL" id="CP000949">
    <property type="protein sequence ID" value="ACA75191.1"/>
    <property type="molecule type" value="Genomic_DNA"/>
</dbReference>
<dbReference type="SMR" id="B1JAG3"/>
<dbReference type="STRING" id="390235.PputW619_4714"/>
<dbReference type="KEGG" id="ppw:PputW619_4714"/>
<dbReference type="eggNOG" id="COG0422">
    <property type="taxonomic scope" value="Bacteria"/>
</dbReference>
<dbReference type="HOGENOM" id="CLU_013181_2_1_6"/>
<dbReference type="OrthoDB" id="9805897at2"/>
<dbReference type="UniPathway" id="UPA00060"/>
<dbReference type="GO" id="GO:0005829">
    <property type="term" value="C:cytosol"/>
    <property type="evidence" value="ECO:0007669"/>
    <property type="project" value="TreeGrafter"/>
</dbReference>
<dbReference type="GO" id="GO:0051539">
    <property type="term" value="F:4 iron, 4 sulfur cluster binding"/>
    <property type="evidence" value="ECO:0007669"/>
    <property type="project" value="UniProtKB-KW"/>
</dbReference>
<dbReference type="GO" id="GO:0016830">
    <property type="term" value="F:carbon-carbon lyase activity"/>
    <property type="evidence" value="ECO:0007669"/>
    <property type="project" value="InterPro"/>
</dbReference>
<dbReference type="GO" id="GO:0008270">
    <property type="term" value="F:zinc ion binding"/>
    <property type="evidence" value="ECO:0007669"/>
    <property type="project" value="UniProtKB-UniRule"/>
</dbReference>
<dbReference type="GO" id="GO:0009228">
    <property type="term" value="P:thiamine biosynthetic process"/>
    <property type="evidence" value="ECO:0007669"/>
    <property type="project" value="UniProtKB-KW"/>
</dbReference>
<dbReference type="GO" id="GO:0009229">
    <property type="term" value="P:thiamine diphosphate biosynthetic process"/>
    <property type="evidence" value="ECO:0007669"/>
    <property type="project" value="UniProtKB-UniRule"/>
</dbReference>
<dbReference type="FunFam" id="3.20.20.540:FF:000001">
    <property type="entry name" value="Phosphomethylpyrimidine synthase"/>
    <property type="match status" value="1"/>
</dbReference>
<dbReference type="Gene3D" id="6.10.250.620">
    <property type="match status" value="1"/>
</dbReference>
<dbReference type="Gene3D" id="3.20.20.540">
    <property type="entry name" value="Radical SAM ThiC family, central domain"/>
    <property type="match status" value="1"/>
</dbReference>
<dbReference type="HAMAP" id="MF_00089">
    <property type="entry name" value="ThiC"/>
    <property type="match status" value="1"/>
</dbReference>
<dbReference type="InterPro" id="IPR037509">
    <property type="entry name" value="ThiC"/>
</dbReference>
<dbReference type="InterPro" id="IPR025747">
    <property type="entry name" value="ThiC-associated_dom"/>
</dbReference>
<dbReference type="InterPro" id="IPR038521">
    <property type="entry name" value="ThiC/Bza_core_dom"/>
</dbReference>
<dbReference type="InterPro" id="IPR002817">
    <property type="entry name" value="ThiC/BzaA/B"/>
</dbReference>
<dbReference type="NCBIfam" id="NF006763">
    <property type="entry name" value="PRK09284.1"/>
    <property type="match status" value="1"/>
</dbReference>
<dbReference type="NCBIfam" id="NF009895">
    <property type="entry name" value="PRK13352.1"/>
    <property type="match status" value="1"/>
</dbReference>
<dbReference type="NCBIfam" id="TIGR00190">
    <property type="entry name" value="thiC"/>
    <property type="match status" value="1"/>
</dbReference>
<dbReference type="PANTHER" id="PTHR30557:SF1">
    <property type="entry name" value="PHOSPHOMETHYLPYRIMIDINE SYNTHASE, CHLOROPLASTIC"/>
    <property type="match status" value="1"/>
</dbReference>
<dbReference type="PANTHER" id="PTHR30557">
    <property type="entry name" value="THIAMINE BIOSYNTHESIS PROTEIN THIC"/>
    <property type="match status" value="1"/>
</dbReference>
<dbReference type="Pfam" id="PF13667">
    <property type="entry name" value="ThiC-associated"/>
    <property type="match status" value="1"/>
</dbReference>
<dbReference type="Pfam" id="PF01964">
    <property type="entry name" value="ThiC_Rad_SAM"/>
    <property type="match status" value="1"/>
</dbReference>
<dbReference type="SFLD" id="SFLDF00407">
    <property type="entry name" value="phosphomethylpyrimidine_syntha"/>
    <property type="match status" value="1"/>
</dbReference>
<dbReference type="SFLD" id="SFLDG01114">
    <property type="entry name" value="phosphomethylpyrimidine_syntha"/>
    <property type="match status" value="1"/>
</dbReference>
<dbReference type="SFLD" id="SFLDS00113">
    <property type="entry name" value="Radical_SAM_Phosphomethylpyrim"/>
    <property type="match status" value="1"/>
</dbReference>
<sequence>MSKQEKTINLSESAQVDQQSVQPFPRSRKIYVEGSRPDIRVPMREISLHDTPTDFGGEANAPVLVYDTSGPYTDPDVIIDVRKGLADVRSAWIDARGDTERLGGLSSNFGQQRLNDAELAKLRFNHVRNPRRAKAGANVSQMHYARQGIITAEMEYVAIRENMKLQEARAAGLLKQQHAGHSFGANIPKEITAEFVREEIARGRAIIPANINHTELEPMIIGRNFLVKINGNIGNSALGSSIEEEVAKLTWGIRWGSDTVMDLSTGKHIHETREWIIRNSPVPIGTVPIYQALEKVGGVAEDLTWELFRDTLIEQAEQGVDYFTIHAGVLLRYVPLTAKRVTGIVSRGGSIMAKWCLAHHQENFLYTHFDEICEIMKAYDVSFSLGDGLRPGSIADANDAAQFGELETLGELTKIAWKHDVQCMIEGPGHVPMQLIKENMDKQLECCDEAPFYTLGPLTTDIAPGYDHITSGIGAAMIGWFGCAMLCYVTPKEHLGLPNKDDVKTGIITYKIAAHAADLAKGHPGAQIRDNALSKARFEFRWEDQFNLGLDPDTARAFHDETLPKESAKVAHFCSMCGPKFCSMKITQEVREYAANLRIDAVDVSVEEGMREQAERFRQEGSQLYHKV</sequence>
<protein>
    <recommendedName>
        <fullName evidence="1">Phosphomethylpyrimidine synthase</fullName>
        <ecNumber evidence="1">4.1.99.17</ecNumber>
    </recommendedName>
    <alternativeName>
        <fullName evidence="1">Hydroxymethylpyrimidine phosphate synthase</fullName>
        <shortName evidence="1">HMP-P synthase</shortName>
        <shortName evidence="1">HMP-phosphate synthase</shortName>
        <shortName evidence="1">HMPP synthase</shortName>
    </alternativeName>
    <alternativeName>
        <fullName evidence="1">Thiamine biosynthesis protein ThiC</fullName>
    </alternativeName>
</protein>
<evidence type="ECO:0000255" key="1">
    <source>
        <dbReference type="HAMAP-Rule" id="MF_00089"/>
    </source>
</evidence>
<evidence type="ECO:0000256" key="2">
    <source>
        <dbReference type="SAM" id="MobiDB-lite"/>
    </source>
</evidence>
<organism>
    <name type="scientific">Pseudomonas putida (strain W619)</name>
    <dbReference type="NCBI Taxonomy" id="390235"/>
    <lineage>
        <taxon>Bacteria</taxon>
        <taxon>Pseudomonadati</taxon>
        <taxon>Pseudomonadota</taxon>
        <taxon>Gammaproteobacteria</taxon>
        <taxon>Pseudomonadales</taxon>
        <taxon>Pseudomonadaceae</taxon>
        <taxon>Pseudomonas</taxon>
    </lineage>
</organism>
<keyword id="KW-0004">4Fe-4S</keyword>
<keyword id="KW-0408">Iron</keyword>
<keyword id="KW-0411">Iron-sulfur</keyword>
<keyword id="KW-0456">Lyase</keyword>
<keyword id="KW-0479">Metal-binding</keyword>
<keyword id="KW-0949">S-adenosyl-L-methionine</keyword>
<keyword id="KW-0784">Thiamine biosynthesis</keyword>
<keyword id="KW-0862">Zinc</keyword>
<gene>
    <name evidence="1" type="primary">thiC</name>
    <name type="ordered locus">PputW619_4714</name>
</gene>
<comment type="function">
    <text evidence="1">Catalyzes the synthesis of the hydroxymethylpyrimidine phosphate (HMP-P) moiety of thiamine from aminoimidazole ribotide (AIR) in a radical S-adenosyl-L-methionine (SAM)-dependent reaction.</text>
</comment>
<comment type="catalytic activity">
    <reaction evidence="1">
        <text>5-amino-1-(5-phospho-beta-D-ribosyl)imidazole + S-adenosyl-L-methionine = 4-amino-2-methyl-5-(phosphooxymethyl)pyrimidine + CO + 5'-deoxyadenosine + formate + L-methionine + 3 H(+)</text>
        <dbReference type="Rhea" id="RHEA:24840"/>
        <dbReference type="ChEBI" id="CHEBI:15378"/>
        <dbReference type="ChEBI" id="CHEBI:15740"/>
        <dbReference type="ChEBI" id="CHEBI:17245"/>
        <dbReference type="ChEBI" id="CHEBI:17319"/>
        <dbReference type="ChEBI" id="CHEBI:57844"/>
        <dbReference type="ChEBI" id="CHEBI:58354"/>
        <dbReference type="ChEBI" id="CHEBI:59789"/>
        <dbReference type="ChEBI" id="CHEBI:137981"/>
        <dbReference type="EC" id="4.1.99.17"/>
    </reaction>
</comment>
<comment type="cofactor">
    <cofactor evidence="1">
        <name>[4Fe-4S] cluster</name>
        <dbReference type="ChEBI" id="CHEBI:49883"/>
    </cofactor>
    <text evidence="1">Binds 1 [4Fe-4S] cluster per subunit. The cluster is coordinated with 3 cysteines and an exchangeable S-adenosyl-L-methionine.</text>
</comment>
<comment type="pathway">
    <text evidence="1">Cofactor biosynthesis; thiamine diphosphate biosynthesis.</text>
</comment>
<comment type="subunit">
    <text evidence="1">Homodimer.</text>
</comment>
<comment type="similarity">
    <text evidence="1">Belongs to the ThiC family.</text>
</comment>
<reference key="1">
    <citation type="submission" date="2008-02" db="EMBL/GenBank/DDBJ databases">
        <title>Complete sequence of Pseudomonas putida W619.</title>
        <authorList>
            <person name="Copeland A."/>
            <person name="Lucas S."/>
            <person name="Lapidus A."/>
            <person name="Barry K."/>
            <person name="Detter J.C."/>
            <person name="Glavina del Rio T."/>
            <person name="Dalin E."/>
            <person name="Tice H."/>
            <person name="Pitluck S."/>
            <person name="Chain P."/>
            <person name="Malfatti S."/>
            <person name="Shin M."/>
            <person name="Vergez L."/>
            <person name="Schmutz J."/>
            <person name="Larimer F."/>
            <person name="Land M."/>
            <person name="Hauser L."/>
            <person name="Kyrpides N."/>
            <person name="Kim E."/>
            <person name="Taghavi S."/>
            <person name="Vangronsveld D."/>
            <person name="van der Lelie D."/>
            <person name="Richardson P."/>
        </authorList>
    </citation>
    <scope>NUCLEOTIDE SEQUENCE [LARGE SCALE GENOMIC DNA]</scope>
    <source>
        <strain>W619</strain>
    </source>
</reference>
<name>THIC_PSEPW</name>